<reference key="1">
    <citation type="submission" date="2006-12" db="EMBL/GenBank/DDBJ databases">
        <authorList>
            <consortium name="NIH - Xenopus Gene Collection (XGC) project"/>
        </authorList>
    </citation>
    <scope>NUCLEOTIDE SEQUENCE [LARGE SCALE MRNA]</scope>
</reference>
<proteinExistence type="evidence at transcript level"/>
<comment type="function">
    <text evidence="1">Creation of an extracellular membrane face which guides the wrapping process and ultimately compacts adjacent lamellae.</text>
</comment>
<comment type="subcellular location">
    <subcellularLocation>
        <location evidence="5">Cell membrane</location>
        <topology evidence="5">Single-pass type I membrane protein</topology>
    </subcellularLocation>
</comment>
<comment type="similarity">
    <text evidence="5">Belongs to the myelin P0 protein family.</text>
</comment>
<protein>
    <recommendedName>
        <fullName>Myelin protein P0</fullName>
    </recommendedName>
    <alternativeName>
        <fullName>Myelin peripheral protein</fullName>
        <shortName>MPP</shortName>
    </alternativeName>
    <alternativeName>
        <fullName>Myelin protein zero</fullName>
    </alternativeName>
</protein>
<evidence type="ECO:0000250" key="1"/>
<evidence type="ECO:0000255" key="2"/>
<evidence type="ECO:0000255" key="3">
    <source>
        <dbReference type="PROSITE-ProRule" id="PRU00114"/>
    </source>
</evidence>
<evidence type="ECO:0000256" key="4">
    <source>
        <dbReference type="SAM" id="MobiDB-lite"/>
    </source>
</evidence>
<evidence type="ECO:0000305" key="5"/>
<keyword id="KW-1003">Cell membrane</keyword>
<keyword id="KW-1015">Disulfide bond</keyword>
<keyword id="KW-0325">Glycoprotein</keyword>
<keyword id="KW-0393">Immunoglobulin domain</keyword>
<keyword id="KW-0472">Membrane</keyword>
<keyword id="KW-1185">Reference proteome</keyword>
<keyword id="KW-0732">Signal</keyword>
<keyword id="KW-0812">Transmembrane</keyword>
<keyword id="KW-1133">Transmembrane helix</keyword>
<name>MYP0_XENLA</name>
<sequence>MEPSGLRTPCSLLALVLLSALVLTPTLAIEVYTDREVYGTAGSRVTLSCSFWSSEWISDDISVTWHYQPDHSREMYSIVHFAKGLSSIDAGIFKDRIEWVGSPKWKDASIVVHNLELTDNGTFTCDVKNPPDVVGKSSYVHLQVQEKGPARAGLILGIIIAVALALVIVVTILILLIRYCWLRRKARVQRELSALERGKLHKAKDSSKRSSRQTPILYAMLDQTRGKSSEKKAKGGIGDSRKDRK</sequence>
<accession>A2VD98</accession>
<feature type="signal peptide" evidence="2">
    <location>
        <begin position="1"/>
        <end position="28"/>
    </location>
</feature>
<feature type="chain" id="PRO_0000376826" description="Myelin protein P0">
    <location>
        <begin position="29"/>
        <end position="245"/>
    </location>
</feature>
<feature type="topological domain" description="Extracellular" evidence="2">
    <location>
        <begin position="29"/>
        <end position="153"/>
    </location>
</feature>
<feature type="transmembrane region" description="Helical" evidence="2">
    <location>
        <begin position="154"/>
        <end position="174"/>
    </location>
</feature>
<feature type="topological domain" description="Cytoplasmic" evidence="2">
    <location>
        <begin position="175"/>
        <end position="245"/>
    </location>
</feature>
<feature type="domain" description="Ig-like V-type">
    <location>
        <begin position="29"/>
        <end position="143"/>
    </location>
</feature>
<feature type="region of interest" description="Disordered" evidence="4">
    <location>
        <begin position="199"/>
        <end position="245"/>
    </location>
</feature>
<feature type="compositionally biased region" description="Basic and acidic residues" evidence="4">
    <location>
        <begin position="199"/>
        <end position="208"/>
    </location>
</feature>
<feature type="compositionally biased region" description="Basic and acidic residues" evidence="4">
    <location>
        <begin position="224"/>
        <end position="245"/>
    </location>
</feature>
<feature type="glycosylation site" description="N-linked (GlcNAc...) asparagine" evidence="2">
    <location>
        <position position="120"/>
    </location>
</feature>
<feature type="disulfide bond" evidence="3">
    <location>
        <begin position="49"/>
        <end position="125"/>
    </location>
</feature>
<gene>
    <name type="primary">mpz</name>
</gene>
<dbReference type="EMBL" id="BC129641">
    <property type="protein sequence ID" value="AAI29642.1"/>
    <property type="molecule type" value="mRNA"/>
</dbReference>
<dbReference type="RefSeq" id="NP_001091356.1">
    <property type="nucleotide sequence ID" value="NM_001097887.1"/>
</dbReference>
<dbReference type="SMR" id="A2VD98"/>
<dbReference type="GlyCosmos" id="A2VD98">
    <property type="glycosylation" value="1 site, No reported glycans"/>
</dbReference>
<dbReference type="DNASU" id="100037196"/>
<dbReference type="GeneID" id="100037196"/>
<dbReference type="KEGG" id="xla:100037196"/>
<dbReference type="AGR" id="Xenbase:XB-GENE-876975"/>
<dbReference type="CTD" id="100037196"/>
<dbReference type="Xenbase" id="XB-GENE-876975">
    <property type="gene designation" value="mpz.S"/>
</dbReference>
<dbReference type="OrthoDB" id="9941287at2759"/>
<dbReference type="Proteomes" id="UP000186698">
    <property type="component" value="Chromosome 8S"/>
</dbReference>
<dbReference type="Bgee" id="100037196">
    <property type="expression patterns" value="Expressed in internal ear and 13 other cell types or tissues"/>
</dbReference>
<dbReference type="GO" id="GO:0005886">
    <property type="term" value="C:plasma membrane"/>
    <property type="evidence" value="ECO:0000318"/>
    <property type="project" value="GO_Central"/>
</dbReference>
<dbReference type="GO" id="GO:0098742">
    <property type="term" value="P:cell-cell adhesion via plasma-membrane adhesion molecules"/>
    <property type="evidence" value="ECO:0000318"/>
    <property type="project" value="GO_Central"/>
</dbReference>
<dbReference type="GO" id="GO:0042552">
    <property type="term" value="P:myelination"/>
    <property type="evidence" value="ECO:0000318"/>
    <property type="project" value="GO_Central"/>
</dbReference>
<dbReference type="CDD" id="cd05879">
    <property type="entry name" value="IgV_P0"/>
    <property type="match status" value="1"/>
</dbReference>
<dbReference type="FunFam" id="2.60.40.10:FF:000193">
    <property type="entry name" value="Myelin protein zero-like 1 like"/>
    <property type="match status" value="1"/>
</dbReference>
<dbReference type="Gene3D" id="2.60.40.10">
    <property type="entry name" value="Immunoglobulins"/>
    <property type="match status" value="1"/>
</dbReference>
<dbReference type="InterPro" id="IPR007110">
    <property type="entry name" value="Ig-like_dom"/>
</dbReference>
<dbReference type="InterPro" id="IPR036179">
    <property type="entry name" value="Ig-like_dom_sf"/>
</dbReference>
<dbReference type="InterPro" id="IPR013783">
    <property type="entry name" value="Ig-like_fold"/>
</dbReference>
<dbReference type="InterPro" id="IPR003599">
    <property type="entry name" value="Ig_sub"/>
</dbReference>
<dbReference type="InterPro" id="IPR013106">
    <property type="entry name" value="Ig_V-set"/>
</dbReference>
<dbReference type="InterPro" id="IPR000920">
    <property type="entry name" value="Myelin_P0-rel"/>
</dbReference>
<dbReference type="InterPro" id="IPR047014">
    <property type="entry name" value="Myelin_P0_Ig-like"/>
</dbReference>
<dbReference type="InterPro" id="IPR019566">
    <property type="entry name" value="MYP0_C"/>
</dbReference>
<dbReference type="PANTHER" id="PTHR13869">
    <property type="entry name" value="MYELIN P0 RELATED"/>
    <property type="match status" value="1"/>
</dbReference>
<dbReference type="PANTHER" id="PTHR13869:SF7">
    <property type="entry name" value="MYELIN PROTEIN P0"/>
    <property type="match status" value="1"/>
</dbReference>
<dbReference type="Pfam" id="PF10570">
    <property type="entry name" value="Myelin-PO_C"/>
    <property type="match status" value="1"/>
</dbReference>
<dbReference type="Pfam" id="PF07686">
    <property type="entry name" value="V-set"/>
    <property type="match status" value="1"/>
</dbReference>
<dbReference type="PRINTS" id="PR00213">
    <property type="entry name" value="MYELINP0"/>
</dbReference>
<dbReference type="SMART" id="SM00409">
    <property type="entry name" value="IG"/>
    <property type="match status" value="1"/>
</dbReference>
<dbReference type="SMART" id="SM00406">
    <property type="entry name" value="IGv"/>
    <property type="match status" value="1"/>
</dbReference>
<dbReference type="SUPFAM" id="SSF48726">
    <property type="entry name" value="Immunoglobulin"/>
    <property type="match status" value="1"/>
</dbReference>
<dbReference type="PROSITE" id="PS50835">
    <property type="entry name" value="IG_LIKE"/>
    <property type="match status" value="1"/>
</dbReference>
<organism>
    <name type="scientific">Xenopus laevis</name>
    <name type="common">African clawed frog</name>
    <dbReference type="NCBI Taxonomy" id="8355"/>
    <lineage>
        <taxon>Eukaryota</taxon>
        <taxon>Metazoa</taxon>
        <taxon>Chordata</taxon>
        <taxon>Craniata</taxon>
        <taxon>Vertebrata</taxon>
        <taxon>Euteleostomi</taxon>
        <taxon>Amphibia</taxon>
        <taxon>Batrachia</taxon>
        <taxon>Anura</taxon>
        <taxon>Pipoidea</taxon>
        <taxon>Pipidae</taxon>
        <taxon>Xenopodinae</taxon>
        <taxon>Xenopus</taxon>
        <taxon>Xenopus</taxon>
    </lineage>
</organism>